<evidence type="ECO:0000250" key="1"/>
<evidence type="ECO:0000255" key="2"/>
<evidence type="ECO:0000305" key="3"/>
<proteinExistence type="evidence at protein level"/>
<sequence length="500" mass="55114">MGLHPCSPVDHGVPSWVLVLLLTLGLCSLQATADSVLDPDFRENYFEQYMDHFNFESFSNKTFGQRFLVSDKFWKMGEGPIFFYTGNEGDIWSLANNSGFIVELAAQQEALLVFAEHRYYGKSLPFGVQSTQRGYTQLLTVEQALADFAVLLQALRHNLGVQDAPTIAFGGSYGGMLSAYMRMKYPHLVAGALAASAPVIAVAGLGNPDQFFRDVTADFYGQSPKCAQAVRDAFQQIKDLFLQGAYDTISQNFGTCQSLSSPKDLTQLFGFARNAFTVLAMMDYPYPTNFLGPLPANPVKVGCERLLSEGQRIMGLRALAGLVYNSSGMEPCFDIYQMYQSCADPTGCGTGSNARAWDYQACTEINLTFDSNNVTDMFPEIPFSDELRQQYCLDTWGVWPRPDWLQTSFWGGDLKAASNIIFSNGDLDPWAGGGIQRNLSTSIIAVTIQGGAHHLDLRASNSEDPPSVVEVRKLEATLIREWVAAARLKQPAEAQWPGPK</sequence>
<keyword id="KW-0031">Aminopeptidase</keyword>
<keyword id="KW-0968">Cytoplasmic vesicle</keyword>
<keyword id="KW-0903">Direct protein sequencing</keyword>
<keyword id="KW-0325">Glycoprotein</keyword>
<keyword id="KW-0378">Hydrolase</keyword>
<keyword id="KW-0458">Lysosome</keyword>
<keyword id="KW-0645">Protease</keyword>
<keyword id="KW-1185">Reference proteome</keyword>
<keyword id="KW-0964">Secreted</keyword>
<keyword id="KW-0720">Serine protease</keyword>
<keyword id="KW-0732">Signal</keyword>
<keyword id="KW-0865">Zymogen</keyword>
<feature type="signal peptide" evidence="2">
    <location>
        <begin position="1"/>
        <end position="33"/>
    </location>
</feature>
<feature type="propeptide" id="PRO_0000027318">
    <location>
        <begin position="34"/>
        <end position="36"/>
    </location>
</feature>
<feature type="chain" id="PRO_0000027319" description="Dipeptidyl peptidase 2">
    <location>
        <begin position="37"/>
        <end position="500"/>
    </location>
</feature>
<feature type="active site" description="Charge relay system" evidence="2">
    <location>
        <position position="172"/>
    </location>
</feature>
<feature type="active site" description="Charge relay system" evidence="2">
    <location>
        <position position="428"/>
    </location>
</feature>
<feature type="active site" description="Charge relay system" evidence="2">
    <location>
        <position position="453"/>
    </location>
</feature>
<feature type="glycosylation site" description="N-linked (GlcNAc...) asparagine" evidence="2">
    <location>
        <position position="60"/>
    </location>
</feature>
<feature type="glycosylation site" description="N-linked (GlcNAc...) asparagine" evidence="2">
    <location>
        <position position="96"/>
    </location>
</feature>
<feature type="glycosylation site" description="N-linked (GlcNAc...) asparagine" evidence="2">
    <location>
        <position position="325"/>
    </location>
</feature>
<feature type="glycosylation site" description="N-linked (GlcNAc...) asparagine" evidence="2">
    <location>
        <position position="366"/>
    </location>
</feature>
<feature type="glycosylation site" description="N-linked (GlcNAc...) asparagine" evidence="2">
    <location>
        <position position="373"/>
    </location>
</feature>
<feature type="glycosylation site" description="N-linked (GlcNAc...) asparagine" evidence="2">
    <location>
        <position position="438"/>
    </location>
</feature>
<gene>
    <name type="primary">Dpp7</name>
    <name type="synonym">Dpp2</name>
</gene>
<organism>
    <name type="scientific">Rattus norvegicus</name>
    <name type="common">Rat</name>
    <dbReference type="NCBI Taxonomy" id="10116"/>
    <lineage>
        <taxon>Eukaryota</taxon>
        <taxon>Metazoa</taxon>
        <taxon>Chordata</taxon>
        <taxon>Craniata</taxon>
        <taxon>Vertebrata</taxon>
        <taxon>Euteleostomi</taxon>
        <taxon>Mammalia</taxon>
        <taxon>Eutheria</taxon>
        <taxon>Euarchontoglires</taxon>
        <taxon>Glires</taxon>
        <taxon>Rodentia</taxon>
        <taxon>Myomorpha</taxon>
        <taxon>Muroidea</taxon>
        <taxon>Muridae</taxon>
        <taxon>Murinae</taxon>
        <taxon>Rattus</taxon>
    </lineage>
</organism>
<dbReference type="EC" id="3.4.14.2"/>
<dbReference type="EMBL" id="AB048711">
    <property type="protein sequence ID" value="BAB13500.1"/>
    <property type="molecule type" value="mRNA"/>
</dbReference>
<dbReference type="EMBL" id="AB038232">
    <property type="protein sequence ID" value="BAB11691.1"/>
    <property type="molecule type" value="mRNA"/>
</dbReference>
<dbReference type="EMBL" id="BC078783">
    <property type="protein sequence ID" value="AAH78783.1"/>
    <property type="molecule type" value="mRNA"/>
</dbReference>
<dbReference type="PIR" id="JC7668">
    <property type="entry name" value="JC7668"/>
</dbReference>
<dbReference type="RefSeq" id="NP_114179.1">
    <property type="nucleotide sequence ID" value="NM_031973.1"/>
</dbReference>
<dbReference type="SMR" id="Q9EPB1"/>
<dbReference type="FunCoup" id="Q9EPB1">
    <property type="interactions" value="190"/>
</dbReference>
<dbReference type="IntAct" id="Q9EPB1">
    <property type="interactions" value="1"/>
</dbReference>
<dbReference type="STRING" id="10116.ENSRNOP00000017271"/>
<dbReference type="BindingDB" id="Q9EPB1"/>
<dbReference type="ChEMBL" id="CHEMBL4352"/>
<dbReference type="ESTHER" id="ratno-dpp2">
    <property type="family name" value="Prolylcarboxypeptidase"/>
</dbReference>
<dbReference type="MEROPS" id="S28.002"/>
<dbReference type="GlyCosmos" id="Q9EPB1">
    <property type="glycosylation" value="6 sites, 2 glycans"/>
</dbReference>
<dbReference type="GlyGen" id="Q9EPB1">
    <property type="glycosylation" value="6 sites, 2 N-linked glycans (1 site)"/>
</dbReference>
<dbReference type="iPTMnet" id="Q9EPB1"/>
<dbReference type="PhosphoSitePlus" id="Q9EPB1"/>
<dbReference type="jPOST" id="Q9EPB1"/>
<dbReference type="PaxDb" id="10116-ENSRNOP00000017271"/>
<dbReference type="Ensembl" id="ENSRNOT00000017271.4">
    <property type="protein sequence ID" value="ENSRNOP00000017271.2"/>
    <property type="gene ID" value="ENSRNOG00000012640.4"/>
</dbReference>
<dbReference type="GeneID" id="83799"/>
<dbReference type="KEGG" id="rno:83799"/>
<dbReference type="UCSC" id="RGD:71073">
    <property type="organism name" value="rat"/>
</dbReference>
<dbReference type="AGR" id="RGD:71073"/>
<dbReference type="CTD" id="29952"/>
<dbReference type="RGD" id="71073">
    <property type="gene designation" value="Dpp7"/>
</dbReference>
<dbReference type="eggNOG" id="KOG2183">
    <property type="taxonomic scope" value="Eukaryota"/>
</dbReference>
<dbReference type="GeneTree" id="ENSGT00940000159838"/>
<dbReference type="HOGENOM" id="CLU_020959_0_0_1"/>
<dbReference type="InParanoid" id="Q9EPB1"/>
<dbReference type="OMA" id="ELYMPMS"/>
<dbReference type="OrthoDB" id="1735038at2759"/>
<dbReference type="PhylomeDB" id="Q9EPB1"/>
<dbReference type="TreeFam" id="TF314414"/>
<dbReference type="Reactome" id="R-RNO-6798695">
    <property type="pathway name" value="Neutrophil degranulation"/>
</dbReference>
<dbReference type="PRO" id="PR:Q9EPB1"/>
<dbReference type="Proteomes" id="UP000002494">
    <property type="component" value="Chromosome 3"/>
</dbReference>
<dbReference type="Bgee" id="ENSRNOG00000012640">
    <property type="expression patterns" value="Expressed in adult mammalian kidney and 19 other cell types or tissues"/>
</dbReference>
<dbReference type="GO" id="GO:0031410">
    <property type="term" value="C:cytoplasmic vesicle"/>
    <property type="evidence" value="ECO:0007669"/>
    <property type="project" value="UniProtKB-KW"/>
</dbReference>
<dbReference type="GO" id="GO:0005576">
    <property type="term" value="C:extracellular region"/>
    <property type="evidence" value="ECO:0007669"/>
    <property type="project" value="UniProtKB-SubCell"/>
</dbReference>
<dbReference type="GO" id="GO:0005764">
    <property type="term" value="C:lysosome"/>
    <property type="evidence" value="ECO:0000266"/>
    <property type="project" value="RGD"/>
</dbReference>
<dbReference type="GO" id="GO:0031982">
    <property type="term" value="C:vesicle"/>
    <property type="evidence" value="ECO:0000266"/>
    <property type="project" value="RGD"/>
</dbReference>
<dbReference type="GO" id="GO:0004177">
    <property type="term" value="F:aminopeptidase activity"/>
    <property type="evidence" value="ECO:0007669"/>
    <property type="project" value="UniProtKB-KW"/>
</dbReference>
<dbReference type="GO" id="GO:0008239">
    <property type="term" value="F:dipeptidyl-peptidase activity"/>
    <property type="evidence" value="ECO:0000314"/>
    <property type="project" value="RGD"/>
</dbReference>
<dbReference type="GO" id="GO:0070008">
    <property type="term" value="F:serine-type exopeptidase activity"/>
    <property type="evidence" value="ECO:0007669"/>
    <property type="project" value="InterPro"/>
</dbReference>
<dbReference type="GO" id="GO:1905146">
    <property type="term" value="P:lysosomal protein catabolic process"/>
    <property type="evidence" value="ECO:0000266"/>
    <property type="project" value="RGD"/>
</dbReference>
<dbReference type="GO" id="GO:0030163">
    <property type="term" value="P:protein catabolic process"/>
    <property type="evidence" value="ECO:0000314"/>
    <property type="project" value="RGD"/>
</dbReference>
<dbReference type="GO" id="GO:0006508">
    <property type="term" value="P:proteolysis"/>
    <property type="evidence" value="ECO:0007669"/>
    <property type="project" value="UniProtKB-KW"/>
</dbReference>
<dbReference type="FunFam" id="3.40.50.1820:FF:000484">
    <property type="entry name" value="Dipeptidyl peptidase 2"/>
    <property type="match status" value="2"/>
</dbReference>
<dbReference type="FunFam" id="1.20.120.980:FF:000001">
    <property type="entry name" value="Dipeptidyl peptidase 7"/>
    <property type="match status" value="1"/>
</dbReference>
<dbReference type="Gene3D" id="3.40.50.1820">
    <property type="entry name" value="alpha/beta hydrolase"/>
    <property type="match status" value="1"/>
</dbReference>
<dbReference type="Gene3D" id="1.20.120.980">
    <property type="entry name" value="Serine carboxypeptidase S28, SKS domain"/>
    <property type="match status" value="1"/>
</dbReference>
<dbReference type="InterPro" id="IPR029058">
    <property type="entry name" value="AB_hydrolase_fold"/>
</dbReference>
<dbReference type="InterPro" id="IPR008758">
    <property type="entry name" value="Peptidase_S28"/>
</dbReference>
<dbReference type="InterPro" id="IPR042269">
    <property type="entry name" value="Ser_carbopepase_S28_SKS"/>
</dbReference>
<dbReference type="PANTHER" id="PTHR11010:SF107">
    <property type="entry name" value="DIPEPTIDYL PEPTIDASE 2"/>
    <property type="match status" value="1"/>
</dbReference>
<dbReference type="PANTHER" id="PTHR11010">
    <property type="entry name" value="PROTEASE S28 PRO-X CARBOXYPEPTIDASE-RELATED"/>
    <property type="match status" value="1"/>
</dbReference>
<dbReference type="Pfam" id="PF05577">
    <property type="entry name" value="Peptidase_S28"/>
    <property type="match status" value="1"/>
</dbReference>
<dbReference type="SUPFAM" id="SSF53474">
    <property type="entry name" value="alpha/beta-Hydrolases"/>
    <property type="match status" value="1"/>
</dbReference>
<protein>
    <recommendedName>
        <fullName>Dipeptidyl peptidase 2</fullName>
        <ecNumber>3.4.14.2</ecNumber>
    </recommendedName>
    <alternativeName>
        <fullName>Dipeptidyl aminopeptidase II</fullName>
    </alternativeName>
    <alternativeName>
        <fullName>Dipeptidyl peptidase 7</fullName>
    </alternativeName>
    <alternativeName>
        <fullName>Dipeptidyl peptidase II</fullName>
        <shortName>DPP II</shortName>
    </alternativeName>
    <alternativeName>
        <fullName>Quiescent cell proline dipeptidase</fullName>
    </alternativeName>
</protein>
<comment type="function">
    <text>Plays an important role in the degradation of some oligopeptides.</text>
</comment>
<comment type="catalytic activity">
    <reaction>
        <text>Release of an N-terminal dipeptide, Xaa-Yaa-|-, preferentially when Yaa is Ala or Pro. Substrates are oligopeptides, preferentially tripeptides.</text>
        <dbReference type="EC" id="3.4.14.2"/>
    </reaction>
</comment>
<comment type="subunit">
    <text>Homodimer.</text>
</comment>
<comment type="subcellular location">
    <subcellularLocation>
        <location>Lysosome</location>
    </subcellularLocation>
    <subcellularLocation>
        <location evidence="1">Cytoplasmic vesicle</location>
    </subcellularLocation>
    <subcellularLocation>
        <location evidence="1">Secreted</location>
    </subcellularLocation>
</comment>
<comment type="tissue specificity">
    <text>Predominantly expressed in kidney, but also expressed in a variety of tissues.</text>
</comment>
<comment type="similarity">
    <text evidence="3">Belongs to the peptidase S28 family.</text>
</comment>
<reference key="1">
    <citation type="journal article" date="2001" name="J. Biochem.">
        <title>Purification, molecular cloning, and immunohistochemical localization of dipeptidyl peptidase II from the rat kidney and its identity with quiescent cell proline dipeptidase.</title>
        <authorList>
            <person name="Araki H."/>
            <person name="Li Y.-H."/>
            <person name="Yamamoto Y."/>
            <person name="Haneda M."/>
            <person name="Nishi K."/>
            <person name="Kikkawa R."/>
            <person name="Ohkubo I."/>
        </authorList>
    </citation>
    <scope>NUCLEOTIDE SEQUENCE [MRNA]</scope>
    <scope>PARTIAL PROTEIN SEQUENCE</scope>
    <scope>CHARACTERIZATION</scope>
    <source>
        <strain>Wistar</strain>
        <tissue>Kidney</tissue>
    </source>
</reference>
<reference key="2">
    <citation type="journal article" date="2001" name="Biochem. J.">
        <title>Cloning and functional expression of rat kidney dipeptidyl peptidase II.</title>
        <authorList>
            <person name="Fukasawa K.M."/>
            <person name="Fukasawa K."/>
            <person name="Higaki K."/>
            <person name="Shiina N."/>
            <person name="Ohno M."/>
            <person name="Ito S."/>
            <person name="Otogoto J."/>
            <person name="Ota N."/>
        </authorList>
    </citation>
    <scope>NUCLEOTIDE SEQUENCE [MRNA]</scope>
    <scope>PARTIAL PROTEIN SEQUENCE</scope>
    <scope>CHARACTERIZATION</scope>
    <source>
        <strain>Wistar</strain>
        <tissue>Kidney</tissue>
    </source>
</reference>
<reference key="3">
    <citation type="journal article" date="2004" name="Genome Res.">
        <title>The status, quality, and expansion of the NIH full-length cDNA project: the Mammalian Gene Collection (MGC).</title>
        <authorList>
            <consortium name="The MGC Project Team"/>
        </authorList>
    </citation>
    <scope>NUCLEOTIDE SEQUENCE [LARGE SCALE MRNA]</scope>
    <source>
        <tissue>Kidney</tissue>
    </source>
</reference>
<reference key="4">
    <citation type="submission" date="2007-09" db="UniProtKB">
        <authorList>
            <person name="Lubec G."/>
            <person name="Kang S.U."/>
            <person name="Lubec S."/>
        </authorList>
    </citation>
    <scope>PROTEIN SEQUENCE OF 67-72; 123-133; 157-184; 214-225; 264-273; 416-437 AND 459-480</scope>
    <scope>IDENTIFICATION BY MASS SPECTROMETRY</scope>
    <source>
        <strain>Sprague-Dawley</strain>
        <tissue>Brain</tissue>
    </source>
</reference>
<name>DPP2_RAT</name>
<accession>Q9EPB1</accession>